<name>CHMU_SCHPO</name>
<sequence length="251" mass="29050">MSLVNEKLKLENIRSALIRQEDTIIFNFLERAQFPRNEKVYKSGKEGCLNLENYDGSFLNYLLHEEEKVYALVRRYASPEEYPFTDNLPEPILPKFSGKFPLHPNNVNVNSEILEYYINEIVPKISSPGDDFDNYGSTVVCDIRCLQSLSRRIHYGKFVAEAKYLANPEKYKKLILARDIKGIENEIVDAAQEERVLKRLHYKALNYGRDAADPTKPSDRINADCVASIYKDYVIPMTKKVEVDYLLARLL</sequence>
<keyword id="KW-0021">Allosteric enzyme</keyword>
<keyword id="KW-0028">Amino-acid biosynthesis</keyword>
<keyword id="KW-0057">Aromatic amino acid biosynthesis</keyword>
<keyword id="KW-0963">Cytoplasm</keyword>
<keyword id="KW-0413">Isomerase</keyword>
<keyword id="KW-0584">Phenylalanine biosynthesis</keyword>
<keyword id="KW-1185">Reference proteome</keyword>
<keyword id="KW-0827">Tyrosine biosynthesis</keyword>
<evidence type="ECO:0000250" key="1">
    <source>
        <dbReference type="UniProtKB" id="P32178"/>
    </source>
</evidence>
<evidence type="ECO:0000255" key="2">
    <source>
        <dbReference type="PROSITE-ProRule" id="PRU00516"/>
    </source>
</evidence>
<evidence type="ECO:0000312" key="3">
    <source>
        <dbReference type="PomBase" id="SPAC16E8.04c"/>
    </source>
</evidence>
<protein>
    <recommendedName>
        <fullName>Chorismate mutase</fullName>
        <shortName>CM</shortName>
        <ecNumber evidence="1">5.4.99.5</ecNumber>
    </recommendedName>
</protein>
<reference key="1">
    <citation type="journal article" date="2002" name="Nature">
        <title>The genome sequence of Schizosaccharomyces pombe.</title>
        <authorList>
            <person name="Wood V."/>
            <person name="Gwilliam R."/>
            <person name="Rajandream M.A."/>
            <person name="Lyne M.H."/>
            <person name="Lyne R."/>
            <person name="Stewart A."/>
            <person name="Sgouros J.G."/>
            <person name="Peat N."/>
            <person name="Hayles J."/>
            <person name="Baker S.G."/>
            <person name="Basham D."/>
            <person name="Bowman S."/>
            <person name="Brooks K."/>
            <person name="Brown D."/>
            <person name="Brown S."/>
            <person name="Chillingworth T."/>
            <person name="Churcher C.M."/>
            <person name="Collins M."/>
            <person name="Connor R."/>
            <person name="Cronin A."/>
            <person name="Davis P."/>
            <person name="Feltwell T."/>
            <person name="Fraser A."/>
            <person name="Gentles S."/>
            <person name="Goble A."/>
            <person name="Hamlin N."/>
            <person name="Harris D.E."/>
            <person name="Hidalgo J."/>
            <person name="Hodgson G."/>
            <person name="Holroyd S."/>
            <person name="Hornsby T."/>
            <person name="Howarth S."/>
            <person name="Huckle E.J."/>
            <person name="Hunt S."/>
            <person name="Jagels K."/>
            <person name="James K.D."/>
            <person name="Jones L."/>
            <person name="Jones M."/>
            <person name="Leather S."/>
            <person name="McDonald S."/>
            <person name="McLean J."/>
            <person name="Mooney P."/>
            <person name="Moule S."/>
            <person name="Mungall K.L."/>
            <person name="Murphy L.D."/>
            <person name="Niblett D."/>
            <person name="Odell C."/>
            <person name="Oliver K."/>
            <person name="O'Neil S."/>
            <person name="Pearson D."/>
            <person name="Quail M.A."/>
            <person name="Rabbinowitsch E."/>
            <person name="Rutherford K.M."/>
            <person name="Rutter S."/>
            <person name="Saunders D."/>
            <person name="Seeger K."/>
            <person name="Sharp S."/>
            <person name="Skelton J."/>
            <person name="Simmonds M.N."/>
            <person name="Squares R."/>
            <person name="Squares S."/>
            <person name="Stevens K."/>
            <person name="Taylor K."/>
            <person name="Taylor R.G."/>
            <person name="Tivey A."/>
            <person name="Walsh S.V."/>
            <person name="Warren T."/>
            <person name="Whitehead S."/>
            <person name="Woodward J.R."/>
            <person name="Volckaert G."/>
            <person name="Aert R."/>
            <person name="Robben J."/>
            <person name="Grymonprez B."/>
            <person name="Weltjens I."/>
            <person name="Vanstreels E."/>
            <person name="Rieger M."/>
            <person name="Schaefer M."/>
            <person name="Mueller-Auer S."/>
            <person name="Gabel C."/>
            <person name="Fuchs M."/>
            <person name="Duesterhoeft A."/>
            <person name="Fritzc C."/>
            <person name="Holzer E."/>
            <person name="Moestl D."/>
            <person name="Hilbert H."/>
            <person name="Borzym K."/>
            <person name="Langer I."/>
            <person name="Beck A."/>
            <person name="Lehrach H."/>
            <person name="Reinhardt R."/>
            <person name="Pohl T.M."/>
            <person name="Eger P."/>
            <person name="Zimmermann W."/>
            <person name="Wedler H."/>
            <person name="Wambutt R."/>
            <person name="Purnelle B."/>
            <person name="Goffeau A."/>
            <person name="Cadieu E."/>
            <person name="Dreano S."/>
            <person name="Gloux S."/>
            <person name="Lelaure V."/>
            <person name="Mottier S."/>
            <person name="Galibert F."/>
            <person name="Aves S.J."/>
            <person name="Xiang Z."/>
            <person name="Hunt C."/>
            <person name="Moore K."/>
            <person name="Hurst S.M."/>
            <person name="Lucas M."/>
            <person name="Rochet M."/>
            <person name="Gaillardin C."/>
            <person name="Tallada V.A."/>
            <person name="Garzon A."/>
            <person name="Thode G."/>
            <person name="Daga R.R."/>
            <person name="Cruzado L."/>
            <person name="Jimenez J."/>
            <person name="Sanchez M."/>
            <person name="del Rey F."/>
            <person name="Benito J."/>
            <person name="Dominguez A."/>
            <person name="Revuelta J.L."/>
            <person name="Moreno S."/>
            <person name="Armstrong J."/>
            <person name="Forsburg S.L."/>
            <person name="Cerutti L."/>
            <person name="Lowe T."/>
            <person name="McCombie W.R."/>
            <person name="Paulsen I."/>
            <person name="Potashkin J."/>
            <person name="Shpakovski G.V."/>
            <person name="Ussery D."/>
            <person name="Barrell B.G."/>
            <person name="Nurse P."/>
        </authorList>
    </citation>
    <scope>NUCLEOTIDE SEQUENCE [LARGE SCALE GENOMIC DNA]</scope>
    <source>
        <strain>972 / ATCC 24843</strain>
    </source>
</reference>
<proteinExistence type="inferred from homology"/>
<organism>
    <name type="scientific">Schizosaccharomyces pombe (strain 972 / ATCC 24843)</name>
    <name type="common">Fission yeast</name>
    <dbReference type="NCBI Taxonomy" id="284812"/>
    <lineage>
        <taxon>Eukaryota</taxon>
        <taxon>Fungi</taxon>
        <taxon>Dikarya</taxon>
        <taxon>Ascomycota</taxon>
        <taxon>Taphrinomycotina</taxon>
        <taxon>Schizosaccharomycetes</taxon>
        <taxon>Schizosaccharomycetales</taxon>
        <taxon>Schizosaccharomycetaceae</taxon>
        <taxon>Schizosaccharomyces</taxon>
    </lineage>
</organism>
<gene>
    <name evidence="3" type="primary">aro7</name>
    <name type="ORF">SPAC16E8.04c</name>
</gene>
<feature type="chain" id="PRO_0000119205" description="Chorismate mutase">
    <location>
        <begin position="1"/>
        <end position="251"/>
    </location>
</feature>
<feature type="domain" description="Chorismate mutase" evidence="2">
    <location>
        <begin position="1"/>
        <end position="251"/>
    </location>
</feature>
<feature type="binding site" evidence="1">
    <location>
        <position position="74"/>
    </location>
    <ligand>
        <name>L-tyrosine</name>
        <dbReference type="ChEBI" id="CHEBI:58315"/>
        <note>allosteric effector</note>
    </ligand>
</feature>
<feature type="binding site" evidence="1">
    <location>
        <position position="75"/>
    </location>
    <ligand>
        <name>L-tyrosine</name>
        <dbReference type="ChEBI" id="CHEBI:58315"/>
        <note>allosteric effector</note>
    </ligand>
</feature>
<feature type="binding site" evidence="1">
    <location>
        <position position="134"/>
    </location>
    <ligand>
        <name>L-tryptophan</name>
        <dbReference type="ChEBI" id="CHEBI:57912"/>
        <note>allosteric effector</note>
    </ligand>
</feature>
<feature type="binding site" evidence="1">
    <location>
        <position position="134"/>
    </location>
    <ligand>
        <name>L-tyrosine</name>
        <dbReference type="ChEBI" id="CHEBI:58315"/>
        <note>allosteric effector</note>
    </ligand>
</feature>
<feature type="binding site" evidence="1">
    <location>
        <position position="136"/>
    </location>
    <ligand>
        <name>L-tryptophan</name>
        <dbReference type="ChEBI" id="CHEBI:57912"/>
        <note>allosteric effector</note>
    </ligand>
</feature>
<feature type="binding site" evidence="1">
    <location>
        <position position="136"/>
    </location>
    <ligand>
        <name>L-tyrosine</name>
        <dbReference type="ChEBI" id="CHEBI:58315"/>
        <note>allosteric effector</note>
    </ligand>
</feature>
<feature type="binding site" evidence="1">
    <location>
        <position position="137"/>
    </location>
    <ligand>
        <name>L-tryptophan</name>
        <dbReference type="ChEBI" id="CHEBI:57912"/>
        <note>allosteric effector</note>
    </ligand>
</feature>
<feature type="binding site" evidence="1">
    <location>
        <position position="137"/>
    </location>
    <ligand>
        <name>L-tyrosine</name>
        <dbReference type="ChEBI" id="CHEBI:58315"/>
        <note>allosteric effector</note>
    </ligand>
</feature>
<comment type="function">
    <text evidence="1">Catalyzes the Claisen rearrangement of chorismate to prephenate (By similarity). Acts at the first branch point in the aromatic amino acid pathway where it steers biosynthesis towards phenylalanine and tyrosine, and away from tryptophan (By similarity).</text>
</comment>
<comment type="catalytic activity">
    <reaction evidence="1">
        <text>chorismate = prephenate</text>
        <dbReference type="Rhea" id="RHEA:13897"/>
        <dbReference type="ChEBI" id="CHEBI:29748"/>
        <dbReference type="ChEBI" id="CHEBI:29934"/>
        <dbReference type="EC" id="5.4.99.5"/>
    </reaction>
    <physiologicalReaction direction="left-to-right" evidence="1">
        <dbReference type="Rhea" id="RHEA:13898"/>
    </physiologicalReaction>
</comment>
<comment type="activity regulation">
    <text evidence="1">Each dimer has two allosteric binding sites that can bind the regulatory effectors tryptophan or tyrosine (By similarity). Can bind either one tryptophan or one tyrosine, two tryptophan or two tyrosine or one tryptophan and one tyrosine, which differentially affect the catalytic activity (By similarity). Activated by tryptophan and subject to feedback inhibition by tyrosine (By similarity). In the presence of both tryptophan and tyrosine, the enzyme is in the activated state (By similarity).</text>
</comment>
<comment type="pathway">
    <text evidence="1">Metabolic intermediate biosynthesis; prephenate biosynthesis; prephenate from chorismate: step 1/1.</text>
</comment>
<comment type="subunit">
    <text evidence="1">Homodimer.</text>
</comment>
<comment type="subcellular location">
    <subcellularLocation>
        <location evidence="1">Cytoplasm</location>
    </subcellularLocation>
</comment>
<accession>O13739</accession>
<dbReference type="EC" id="5.4.99.5" evidence="1"/>
<dbReference type="EMBL" id="CU329670">
    <property type="protein sequence ID" value="CAB11033.1"/>
    <property type="molecule type" value="Genomic_DNA"/>
</dbReference>
<dbReference type="PIR" id="T37784">
    <property type="entry name" value="T37784"/>
</dbReference>
<dbReference type="RefSeq" id="NP_594216.1">
    <property type="nucleotide sequence ID" value="NM_001019639.2"/>
</dbReference>
<dbReference type="SMR" id="O13739"/>
<dbReference type="FunCoup" id="O13739">
    <property type="interactions" value="430"/>
</dbReference>
<dbReference type="STRING" id="284812.O13739"/>
<dbReference type="iPTMnet" id="O13739"/>
<dbReference type="PaxDb" id="4896-SPAC16E8.04c.1"/>
<dbReference type="EnsemblFungi" id="SPAC16E8.04c.1">
    <property type="protein sequence ID" value="SPAC16E8.04c.1:pep"/>
    <property type="gene ID" value="SPAC16E8.04c"/>
</dbReference>
<dbReference type="GeneID" id="2542334"/>
<dbReference type="KEGG" id="spo:2542334"/>
<dbReference type="PomBase" id="SPAC16E8.04c">
    <property type="gene designation" value="aro7"/>
</dbReference>
<dbReference type="VEuPathDB" id="FungiDB:SPAC16E8.04c"/>
<dbReference type="eggNOG" id="KOG0795">
    <property type="taxonomic scope" value="Eukaryota"/>
</dbReference>
<dbReference type="HOGENOM" id="CLU_057757_0_0_1"/>
<dbReference type="InParanoid" id="O13739"/>
<dbReference type="OMA" id="FLDWALM"/>
<dbReference type="PhylomeDB" id="O13739"/>
<dbReference type="UniPathway" id="UPA00120">
    <property type="reaction ID" value="UER00203"/>
</dbReference>
<dbReference type="PRO" id="PR:O13739"/>
<dbReference type="Proteomes" id="UP000002485">
    <property type="component" value="Chromosome I"/>
</dbReference>
<dbReference type="GO" id="GO:0005737">
    <property type="term" value="C:cytoplasm"/>
    <property type="evidence" value="ECO:0000318"/>
    <property type="project" value="GO_Central"/>
</dbReference>
<dbReference type="GO" id="GO:0005829">
    <property type="term" value="C:cytosol"/>
    <property type="evidence" value="ECO:0007005"/>
    <property type="project" value="PomBase"/>
</dbReference>
<dbReference type="GO" id="GO:0005634">
    <property type="term" value="C:nucleus"/>
    <property type="evidence" value="ECO:0007005"/>
    <property type="project" value="PomBase"/>
</dbReference>
<dbReference type="GO" id="GO:0004106">
    <property type="term" value="F:chorismate mutase activity"/>
    <property type="evidence" value="ECO:0000318"/>
    <property type="project" value="GO_Central"/>
</dbReference>
<dbReference type="GO" id="GO:0009073">
    <property type="term" value="P:aromatic amino acid family biosynthetic process"/>
    <property type="evidence" value="ECO:0000318"/>
    <property type="project" value="GO_Central"/>
</dbReference>
<dbReference type="GO" id="GO:0046417">
    <property type="term" value="P:chorismate metabolic process"/>
    <property type="evidence" value="ECO:0007669"/>
    <property type="project" value="InterPro"/>
</dbReference>
<dbReference type="GO" id="GO:0009094">
    <property type="term" value="P:L-phenylalanine biosynthetic process"/>
    <property type="evidence" value="ECO:0007669"/>
    <property type="project" value="UniProtKB-KW"/>
</dbReference>
<dbReference type="GO" id="GO:0006571">
    <property type="term" value="P:tyrosine biosynthetic process"/>
    <property type="evidence" value="ECO:0000250"/>
    <property type="project" value="PomBase"/>
</dbReference>
<dbReference type="FunFam" id="1.10.590.10:FF:000002">
    <property type="entry name" value="Chorismate mutase"/>
    <property type="match status" value="1"/>
</dbReference>
<dbReference type="Gene3D" id="1.10.590.10">
    <property type="entry name" value="Chorismate mutase, AroQ class superfamily, eukaryotic"/>
    <property type="match status" value="1"/>
</dbReference>
<dbReference type="InterPro" id="IPR036263">
    <property type="entry name" value="Chorismate_II_sf"/>
</dbReference>
<dbReference type="InterPro" id="IPR008238">
    <property type="entry name" value="Chorismate_mutase_AroQ_euk"/>
</dbReference>
<dbReference type="InterPro" id="IPR037039">
    <property type="entry name" value="CM_AroQ_sf_eucaryotic"/>
</dbReference>
<dbReference type="InterPro" id="IPR002701">
    <property type="entry name" value="CM_II_prokaryot"/>
</dbReference>
<dbReference type="NCBIfam" id="TIGR01802">
    <property type="entry name" value="CM_pl-yst"/>
    <property type="match status" value="1"/>
</dbReference>
<dbReference type="PANTHER" id="PTHR21145">
    <property type="entry name" value="CHORISMATE MUTASE"/>
    <property type="match status" value="1"/>
</dbReference>
<dbReference type="PANTHER" id="PTHR21145:SF12">
    <property type="entry name" value="CHORISMATE MUTASE"/>
    <property type="match status" value="1"/>
</dbReference>
<dbReference type="Pfam" id="PF01817">
    <property type="entry name" value="CM_2"/>
    <property type="match status" value="1"/>
</dbReference>
<dbReference type="PIRSF" id="PIRSF017318">
    <property type="entry name" value="Chor_mut_AroQ_eu"/>
    <property type="match status" value="1"/>
</dbReference>
<dbReference type="SUPFAM" id="SSF48600">
    <property type="entry name" value="Chorismate mutase II"/>
    <property type="match status" value="1"/>
</dbReference>
<dbReference type="PROSITE" id="PS51169">
    <property type="entry name" value="CHORISMATE_MUT_3"/>
    <property type="match status" value="1"/>
</dbReference>